<name>RS16_PROM2</name>
<accession>A8G695</accession>
<dbReference type="EMBL" id="CP000825">
    <property type="protein sequence ID" value="ABV51126.1"/>
    <property type="molecule type" value="Genomic_DNA"/>
</dbReference>
<dbReference type="RefSeq" id="WP_012008173.1">
    <property type="nucleotide sequence ID" value="NC_009840.1"/>
</dbReference>
<dbReference type="SMR" id="A8G695"/>
<dbReference type="STRING" id="93060.P9215_15131"/>
<dbReference type="KEGG" id="pmh:P9215_15131"/>
<dbReference type="eggNOG" id="COG0228">
    <property type="taxonomic scope" value="Bacteria"/>
</dbReference>
<dbReference type="HOGENOM" id="CLU_100590_3_2_3"/>
<dbReference type="OrthoDB" id="9807878at2"/>
<dbReference type="Proteomes" id="UP000002014">
    <property type="component" value="Chromosome"/>
</dbReference>
<dbReference type="GO" id="GO:0005737">
    <property type="term" value="C:cytoplasm"/>
    <property type="evidence" value="ECO:0007669"/>
    <property type="project" value="UniProtKB-ARBA"/>
</dbReference>
<dbReference type="GO" id="GO:0015935">
    <property type="term" value="C:small ribosomal subunit"/>
    <property type="evidence" value="ECO:0007669"/>
    <property type="project" value="TreeGrafter"/>
</dbReference>
<dbReference type="GO" id="GO:0003735">
    <property type="term" value="F:structural constituent of ribosome"/>
    <property type="evidence" value="ECO:0007669"/>
    <property type="project" value="InterPro"/>
</dbReference>
<dbReference type="GO" id="GO:0006412">
    <property type="term" value="P:translation"/>
    <property type="evidence" value="ECO:0007669"/>
    <property type="project" value="UniProtKB-UniRule"/>
</dbReference>
<dbReference type="Gene3D" id="3.30.1320.10">
    <property type="match status" value="1"/>
</dbReference>
<dbReference type="HAMAP" id="MF_00385">
    <property type="entry name" value="Ribosomal_bS16"/>
    <property type="match status" value="1"/>
</dbReference>
<dbReference type="InterPro" id="IPR000307">
    <property type="entry name" value="Ribosomal_bS16"/>
</dbReference>
<dbReference type="InterPro" id="IPR020592">
    <property type="entry name" value="Ribosomal_bS16_CS"/>
</dbReference>
<dbReference type="InterPro" id="IPR023803">
    <property type="entry name" value="Ribosomal_bS16_dom_sf"/>
</dbReference>
<dbReference type="NCBIfam" id="TIGR00002">
    <property type="entry name" value="S16"/>
    <property type="match status" value="1"/>
</dbReference>
<dbReference type="PANTHER" id="PTHR12919">
    <property type="entry name" value="30S RIBOSOMAL PROTEIN S16"/>
    <property type="match status" value="1"/>
</dbReference>
<dbReference type="PANTHER" id="PTHR12919:SF20">
    <property type="entry name" value="SMALL RIBOSOMAL SUBUNIT PROTEIN BS16M"/>
    <property type="match status" value="1"/>
</dbReference>
<dbReference type="Pfam" id="PF00886">
    <property type="entry name" value="Ribosomal_S16"/>
    <property type="match status" value="1"/>
</dbReference>
<dbReference type="SUPFAM" id="SSF54565">
    <property type="entry name" value="Ribosomal protein S16"/>
    <property type="match status" value="1"/>
</dbReference>
<dbReference type="PROSITE" id="PS00732">
    <property type="entry name" value="RIBOSOMAL_S16"/>
    <property type="match status" value="1"/>
</dbReference>
<gene>
    <name evidence="1" type="primary">rpsP</name>
    <name evidence="1" type="synonym">rps16</name>
    <name type="ordered locus">P9215_15131</name>
</gene>
<protein>
    <recommendedName>
        <fullName evidence="1">Small ribosomal subunit protein bS16</fullName>
    </recommendedName>
    <alternativeName>
        <fullName evidence="3">30S ribosomal protein S16</fullName>
    </alternativeName>
</protein>
<comment type="similarity">
    <text evidence="1">Belongs to the bacterial ribosomal protein bS16 family.</text>
</comment>
<sequence length="121" mass="13633">MIKLRLKRFGKKKEASFRIVACNSTSRRDGRPLQELGFYNPRTKETRLDTEALRTRLTQGAQPTDVVRTLLEKGGLLEKIERPSIAIGKAKLEKEKKAKAKTKEEENEGSKTESGSNEAES</sequence>
<reference key="1">
    <citation type="journal article" date="2007" name="PLoS Genet.">
        <title>Patterns and implications of gene gain and loss in the evolution of Prochlorococcus.</title>
        <authorList>
            <person name="Kettler G.C."/>
            <person name="Martiny A.C."/>
            <person name="Huang K."/>
            <person name="Zucker J."/>
            <person name="Coleman M.L."/>
            <person name="Rodrigue S."/>
            <person name="Chen F."/>
            <person name="Lapidus A."/>
            <person name="Ferriera S."/>
            <person name="Johnson J."/>
            <person name="Steglich C."/>
            <person name="Church G.M."/>
            <person name="Richardson P."/>
            <person name="Chisholm S.W."/>
        </authorList>
    </citation>
    <scope>NUCLEOTIDE SEQUENCE [LARGE SCALE GENOMIC DNA]</scope>
    <source>
        <strain>MIT 9215</strain>
    </source>
</reference>
<proteinExistence type="inferred from homology"/>
<organism>
    <name type="scientific">Prochlorococcus marinus (strain MIT 9215)</name>
    <dbReference type="NCBI Taxonomy" id="93060"/>
    <lineage>
        <taxon>Bacteria</taxon>
        <taxon>Bacillati</taxon>
        <taxon>Cyanobacteriota</taxon>
        <taxon>Cyanophyceae</taxon>
        <taxon>Synechococcales</taxon>
        <taxon>Prochlorococcaceae</taxon>
        <taxon>Prochlorococcus</taxon>
    </lineage>
</organism>
<keyword id="KW-0687">Ribonucleoprotein</keyword>
<keyword id="KW-0689">Ribosomal protein</keyword>
<evidence type="ECO:0000255" key="1">
    <source>
        <dbReference type="HAMAP-Rule" id="MF_00385"/>
    </source>
</evidence>
<evidence type="ECO:0000256" key="2">
    <source>
        <dbReference type="SAM" id="MobiDB-lite"/>
    </source>
</evidence>
<evidence type="ECO:0000305" key="3"/>
<feature type="chain" id="PRO_1000060712" description="Small ribosomal subunit protein bS16">
    <location>
        <begin position="1"/>
        <end position="121"/>
    </location>
</feature>
<feature type="region of interest" description="Disordered" evidence="2">
    <location>
        <begin position="88"/>
        <end position="121"/>
    </location>
</feature>
<feature type="compositionally biased region" description="Basic and acidic residues" evidence="2">
    <location>
        <begin position="90"/>
        <end position="111"/>
    </location>
</feature>
<feature type="compositionally biased region" description="Polar residues" evidence="2">
    <location>
        <begin position="112"/>
        <end position="121"/>
    </location>
</feature>